<sequence>MTTAVGTPGSAITQRVHSLNRPNMVSVGTIIWLSSELMFFAGLFAMYFVARAQANGNWPPEPTELNLKLAVPVTAVLVASSFTCQMGVFAAEKGDVFGLRRWYFITLLMGAFFVAGQGYEYYHLVHEGTSISSSAYGSVFYITTGFHGLHVIGGLIAFVFLLIRTKVSKFTPAQATAAIVVSYYWHFVDIVWIGLFATIYFVR</sequence>
<accession>Q5YZ19</accession>
<keyword id="KW-1003">Cell membrane</keyword>
<keyword id="KW-0472">Membrane</keyword>
<keyword id="KW-1185">Reference proteome</keyword>
<keyword id="KW-1278">Translocase</keyword>
<keyword id="KW-0812">Transmembrane</keyword>
<keyword id="KW-1133">Transmembrane helix</keyword>
<organism>
    <name type="scientific">Nocardia farcinica (strain IFM 10152)</name>
    <dbReference type="NCBI Taxonomy" id="247156"/>
    <lineage>
        <taxon>Bacteria</taxon>
        <taxon>Bacillati</taxon>
        <taxon>Actinomycetota</taxon>
        <taxon>Actinomycetes</taxon>
        <taxon>Mycobacteriales</taxon>
        <taxon>Nocardiaceae</taxon>
        <taxon>Nocardia</taxon>
    </lineage>
</organism>
<dbReference type="EC" id="7.1.1.9"/>
<dbReference type="EMBL" id="AP006618">
    <property type="protein sequence ID" value="BAD56572.1"/>
    <property type="molecule type" value="Genomic_DNA"/>
</dbReference>
<dbReference type="RefSeq" id="WP_011208257.1">
    <property type="nucleotide sequence ID" value="NC_006361.1"/>
</dbReference>
<dbReference type="SMR" id="Q5YZ19"/>
<dbReference type="STRING" id="247156.NFA_17260"/>
<dbReference type="GeneID" id="61132508"/>
<dbReference type="KEGG" id="nfa:NFA_17260"/>
<dbReference type="eggNOG" id="COG1845">
    <property type="taxonomic scope" value="Bacteria"/>
</dbReference>
<dbReference type="HOGENOM" id="CLU_044071_1_1_11"/>
<dbReference type="OrthoDB" id="9810850at2"/>
<dbReference type="Proteomes" id="UP000006820">
    <property type="component" value="Chromosome"/>
</dbReference>
<dbReference type="GO" id="GO:0005886">
    <property type="term" value="C:plasma membrane"/>
    <property type="evidence" value="ECO:0007669"/>
    <property type="project" value="UniProtKB-SubCell"/>
</dbReference>
<dbReference type="GO" id="GO:0004129">
    <property type="term" value="F:cytochrome-c oxidase activity"/>
    <property type="evidence" value="ECO:0007669"/>
    <property type="project" value="UniProtKB-EC"/>
</dbReference>
<dbReference type="GO" id="GO:0019646">
    <property type="term" value="P:aerobic electron transport chain"/>
    <property type="evidence" value="ECO:0007669"/>
    <property type="project" value="InterPro"/>
</dbReference>
<dbReference type="CDD" id="cd00386">
    <property type="entry name" value="Heme_Cu_Oxidase_III_like"/>
    <property type="match status" value="1"/>
</dbReference>
<dbReference type="FunFam" id="1.20.120.80:FF:000001">
    <property type="entry name" value="Cytochrome (Ubi)quinol oxidase subunit III"/>
    <property type="match status" value="1"/>
</dbReference>
<dbReference type="Gene3D" id="1.20.120.80">
    <property type="entry name" value="Cytochrome c oxidase, subunit III, four-helix bundle"/>
    <property type="match status" value="1"/>
</dbReference>
<dbReference type="InterPro" id="IPR024791">
    <property type="entry name" value="Cyt_c/ubiquinol_Oxase_su3"/>
</dbReference>
<dbReference type="InterPro" id="IPR000298">
    <property type="entry name" value="Cyt_c_oxidase-like_su3"/>
</dbReference>
<dbReference type="InterPro" id="IPR035973">
    <property type="entry name" value="Cyt_c_oxidase_su3-like_sf"/>
</dbReference>
<dbReference type="InterPro" id="IPR013833">
    <property type="entry name" value="Cyt_c_oxidase_su3_a-hlx"/>
</dbReference>
<dbReference type="PANTHER" id="PTHR11403:SF2">
    <property type="entry name" value="CYTOCHROME BO(3) UBIQUINOL OXIDASE SUBUNIT 3"/>
    <property type="match status" value="1"/>
</dbReference>
<dbReference type="PANTHER" id="PTHR11403">
    <property type="entry name" value="CYTOCHROME C OXIDASE SUBUNIT III"/>
    <property type="match status" value="1"/>
</dbReference>
<dbReference type="Pfam" id="PF00510">
    <property type="entry name" value="COX3"/>
    <property type="match status" value="1"/>
</dbReference>
<dbReference type="SUPFAM" id="SSF81452">
    <property type="entry name" value="Cytochrome c oxidase subunit III-like"/>
    <property type="match status" value="1"/>
</dbReference>
<dbReference type="PROSITE" id="PS50253">
    <property type="entry name" value="COX3"/>
    <property type="match status" value="1"/>
</dbReference>
<proteinExistence type="inferred from homology"/>
<name>COX3_NOCFA</name>
<feature type="chain" id="PRO_0000183885" description="Probable cytochrome c oxidase subunit 3">
    <location>
        <begin position="1"/>
        <end position="203"/>
    </location>
</feature>
<feature type="transmembrane region" description="Helical" evidence="2">
    <location>
        <begin position="30"/>
        <end position="50"/>
    </location>
</feature>
<feature type="transmembrane region" description="Helical" evidence="2">
    <location>
        <begin position="69"/>
        <end position="89"/>
    </location>
</feature>
<feature type="transmembrane region" description="Helical" evidence="2">
    <location>
        <begin position="102"/>
        <end position="122"/>
    </location>
</feature>
<feature type="transmembrane region" description="Helical" evidence="2">
    <location>
        <begin position="142"/>
        <end position="162"/>
    </location>
</feature>
<feature type="transmembrane region" description="Helical" evidence="2">
    <location>
        <begin position="179"/>
        <end position="199"/>
    </location>
</feature>
<comment type="catalytic activity">
    <reaction>
        <text>4 Fe(II)-[cytochrome c] + O2 + 8 H(+)(in) = 4 Fe(III)-[cytochrome c] + 2 H2O + 4 H(+)(out)</text>
        <dbReference type="Rhea" id="RHEA:11436"/>
        <dbReference type="Rhea" id="RHEA-COMP:10350"/>
        <dbReference type="Rhea" id="RHEA-COMP:14399"/>
        <dbReference type="ChEBI" id="CHEBI:15377"/>
        <dbReference type="ChEBI" id="CHEBI:15378"/>
        <dbReference type="ChEBI" id="CHEBI:15379"/>
        <dbReference type="ChEBI" id="CHEBI:29033"/>
        <dbReference type="ChEBI" id="CHEBI:29034"/>
        <dbReference type="EC" id="7.1.1.9"/>
    </reaction>
</comment>
<comment type="subcellular location">
    <subcellularLocation>
        <location evidence="1">Cell membrane</location>
        <topology evidence="1">Multi-pass membrane protein</topology>
    </subcellularLocation>
</comment>
<comment type="similarity">
    <text evidence="3">Belongs to the cytochrome c oxidase subunit 3 family.</text>
</comment>
<gene>
    <name type="primary">ctaE</name>
    <name type="ordered locus">NFA_17260</name>
</gene>
<evidence type="ECO:0000250" key="1"/>
<evidence type="ECO:0000255" key="2"/>
<evidence type="ECO:0000305" key="3"/>
<reference key="1">
    <citation type="journal article" date="2004" name="Proc. Natl. Acad. Sci. U.S.A.">
        <title>The complete genomic sequence of Nocardia farcinica IFM 10152.</title>
        <authorList>
            <person name="Ishikawa J."/>
            <person name="Yamashita A."/>
            <person name="Mikami Y."/>
            <person name="Hoshino Y."/>
            <person name="Kurita H."/>
            <person name="Hotta K."/>
            <person name="Shiba T."/>
            <person name="Hattori M."/>
        </authorList>
    </citation>
    <scope>NUCLEOTIDE SEQUENCE [LARGE SCALE GENOMIC DNA]</scope>
    <source>
        <strain>IFM 10152</strain>
    </source>
</reference>
<protein>
    <recommendedName>
        <fullName>Probable cytochrome c oxidase subunit 3</fullName>
        <ecNumber>7.1.1.9</ecNumber>
    </recommendedName>
    <alternativeName>
        <fullName>Cytochrome aa3 subunit 3</fullName>
    </alternativeName>
    <alternativeName>
        <fullName>Cytochrome c oxidase polypeptide III</fullName>
    </alternativeName>
</protein>